<protein>
    <recommendedName>
        <fullName evidence="1">Beta-hexosaminidase</fullName>
        <ecNumber evidence="1">3.2.1.52</ecNumber>
    </recommendedName>
    <alternativeName>
        <fullName evidence="1">Beta-N-acetylhexosaminidase</fullName>
    </alternativeName>
    <alternativeName>
        <fullName evidence="1">N-acetyl-beta-glucosaminidase</fullName>
    </alternativeName>
</protein>
<reference key="1">
    <citation type="journal article" date="2009" name="J. Bacteriol.">
        <title>Genomic sequencing reveals regulatory mutations and recombinational events in the widely used MC4100 lineage of Escherichia coli K-12.</title>
        <authorList>
            <person name="Ferenci T."/>
            <person name="Zhou Z."/>
            <person name="Betteridge T."/>
            <person name="Ren Y."/>
            <person name="Liu Y."/>
            <person name="Feng L."/>
            <person name="Reeves P.R."/>
            <person name="Wang L."/>
        </authorList>
    </citation>
    <scope>NUCLEOTIDE SEQUENCE [LARGE SCALE GENOMIC DNA]</scope>
    <source>
        <strain>K12 / MC4100 / BW2952</strain>
    </source>
</reference>
<organism>
    <name type="scientific">Escherichia coli (strain K12 / MC4100 / BW2952)</name>
    <dbReference type="NCBI Taxonomy" id="595496"/>
    <lineage>
        <taxon>Bacteria</taxon>
        <taxon>Pseudomonadati</taxon>
        <taxon>Pseudomonadota</taxon>
        <taxon>Gammaproteobacteria</taxon>
        <taxon>Enterobacterales</taxon>
        <taxon>Enterobacteriaceae</taxon>
        <taxon>Escherichia</taxon>
    </lineage>
</organism>
<proteinExistence type="inferred from homology"/>
<name>NAGZ_ECOBW</name>
<feature type="chain" id="PRO_1000205459" description="Beta-hexosaminidase">
    <location>
        <begin position="1"/>
        <end position="341"/>
    </location>
</feature>
<feature type="active site" description="Proton donor/acceptor" evidence="1">
    <location>
        <position position="176"/>
    </location>
</feature>
<feature type="active site" description="Nucleophile" evidence="1">
    <location>
        <position position="248"/>
    </location>
</feature>
<feature type="binding site" evidence="1">
    <location>
        <position position="62"/>
    </location>
    <ligand>
        <name>substrate</name>
    </ligand>
</feature>
<feature type="binding site" evidence="1">
    <location>
        <position position="70"/>
    </location>
    <ligand>
        <name>substrate</name>
    </ligand>
</feature>
<feature type="binding site" evidence="1">
    <location>
        <position position="133"/>
    </location>
    <ligand>
        <name>substrate</name>
    </ligand>
</feature>
<feature type="binding site" evidence="1">
    <location>
        <begin position="163"/>
        <end position="164"/>
    </location>
    <ligand>
        <name>substrate</name>
    </ligand>
</feature>
<feature type="site" description="Important for catalytic activity" evidence="1">
    <location>
        <position position="174"/>
    </location>
</feature>
<gene>
    <name evidence="1" type="primary">nagZ</name>
    <name type="ordered locus">BWG_0955</name>
</gene>
<evidence type="ECO:0000255" key="1">
    <source>
        <dbReference type="HAMAP-Rule" id="MF_00364"/>
    </source>
</evidence>
<accession>C4ZS47</accession>
<sequence>MGPVMLDVEGYELDAEEREILAHPLVGGLILFTRNYHDPAQLRELVRQIRAASRNRLVVAVDQEGGRVQRFREGFTRLPAAQSFAALSGMEEGGKLAQEAGWLMASEMIAMDIDISFAPVLDVGHISAAIGERSYHADPQKALAIASRFIDGMHEAGMKTTGKHFPGHGAVTADSHKETPCDPRPQAEIRAKDMSVFSSLIRENKLDAIMPAHVIYSDVDPRPASGSPYWLKTVLRQELGFDGVIFSDDLSMEGAAIMGSYAERGQASLDAGCDMILVCNNRKGAVSVLDNLSPIKAERVTRLYHKGSFSRQELMDSARWKAISTRLNQLHERWQEEKAGH</sequence>
<dbReference type="EC" id="3.2.1.52" evidence="1"/>
<dbReference type="EMBL" id="CP001396">
    <property type="protein sequence ID" value="ACR62054.1"/>
    <property type="molecule type" value="Genomic_DNA"/>
</dbReference>
<dbReference type="RefSeq" id="WP_000529320.1">
    <property type="nucleotide sequence ID" value="NC_012759.1"/>
</dbReference>
<dbReference type="SMR" id="C4ZS47"/>
<dbReference type="CAZy" id="GH3">
    <property type="family name" value="Glycoside Hydrolase Family 3"/>
</dbReference>
<dbReference type="KEGG" id="ebw:BWG_0955"/>
<dbReference type="HOGENOM" id="CLU_008392_0_0_6"/>
<dbReference type="UniPathway" id="UPA00544"/>
<dbReference type="GO" id="GO:0005737">
    <property type="term" value="C:cytoplasm"/>
    <property type="evidence" value="ECO:0007669"/>
    <property type="project" value="UniProtKB-SubCell"/>
</dbReference>
<dbReference type="GO" id="GO:0004563">
    <property type="term" value="F:beta-N-acetylhexosaminidase activity"/>
    <property type="evidence" value="ECO:0007669"/>
    <property type="project" value="UniProtKB-UniRule"/>
</dbReference>
<dbReference type="GO" id="GO:0005975">
    <property type="term" value="P:carbohydrate metabolic process"/>
    <property type="evidence" value="ECO:0007669"/>
    <property type="project" value="InterPro"/>
</dbReference>
<dbReference type="GO" id="GO:0051301">
    <property type="term" value="P:cell division"/>
    <property type="evidence" value="ECO:0007669"/>
    <property type="project" value="UniProtKB-KW"/>
</dbReference>
<dbReference type="GO" id="GO:0071555">
    <property type="term" value="P:cell wall organization"/>
    <property type="evidence" value="ECO:0007669"/>
    <property type="project" value="UniProtKB-KW"/>
</dbReference>
<dbReference type="GO" id="GO:0009252">
    <property type="term" value="P:peptidoglycan biosynthetic process"/>
    <property type="evidence" value="ECO:0007669"/>
    <property type="project" value="UniProtKB-KW"/>
</dbReference>
<dbReference type="GO" id="GO:0009254">
    <property type="term" value="P:peptidoglycan turnover"/>
    <property type="evidence" value="ECO:0007669"/>
    <property type="project" value="UniProtKB-UniRule"/>
</dbReference>
<dbReference type="GO" id="GO:0008360">
    <property type="term" value="P:regulation of cell shape"/>
    <property type="evidence" value="ECO:0007669"/>
    <property type="project" value="UniProtKB-KW"/>
</dbReference>
<dbReference type="FunFam" id="3.20.20.300:FF:000001">
    <property type="entry name" value="Beta-hexosaminidase"/>
    <property type="match status" value="1"/>
</dbReference>
<dbReference type="Gene3D" id="3.20.20.300">
    <property type="entry name" value="Glycoside hydrolase, family 3, N-terminal domain"/>
    <property type="match status" value="1"/>
</dbReference>
<dbReference type="HAMAP" id="MF_00364">
    <property type="entry name" value="NagZ"/>
    <property type="match status" value="1"/>
</dbReference>
<dbReference type="InterPro" id="IPR022956">
    <property type="entry name" value="Beta_hexosaminidase_bac"/>
</dbReference>
<dbReference type="InterPro" id="IPR019800">
    <property type="entry name" value="Glyco_hydro_3_AS"/>
</dbReference>
<dbReference type="InterPro" id="IPR001764">
    <property type="entry name" value="Glyco_hydro_3_N"/>
</dbReference>
<dbReference type="InterPro" id="IPR036962">
    <property type="entry name" value="Glyco_hydro_3_N_sf"/>
</dbReference>
<dbReference type="InterPro" id="IPR017853">
    <property type="entry name" value="Glycoside_hydrolase_SF"/>
</dbReference>
<dbReference type="InterPro" id="IPR050226">
    <property type="entry name" value="NagZ_Beta-hexosaminidase"/>
</dbReference>
<dbReference type="NCBIfam" id="NF003740">
    <property type="entry name" value="PRK05337.1"/>
    <property type="match status" value="1"/>
</dbReference>
<dbReference type="PANTHER" id="PTHR30480:SF13">
    <property type="entry name" value="BETA-HEXOSAMINIDASE"/>
    <property type="match status" value="1"/>
</dbReference>
<dbReference type="PANTHER" id="PTHR30480">
    <property type="entry name" value="BETA-HEXOSAMINIDASE-RELATED"/>
    <property type="match status" value="1"/>
</dbReference>
<dbReference type="Pfam" id="PF00933">
    <property type="entry name" value="Glyco_hydro_3"/>
    <property type="match status" value="1"/>
</dbReference>
<dbReference type="SUPFAM" id="SSF51445">
    <property type="entry name" value="(Trans)glycosidases"/>
    <property type="match status" value="1"/>
</dbReference>
<dbReference type="PROSITE" id="PS00775">
    <property type="entry name" value="GLYCOSYL_HYDROL_F3"/>
    <property type="match status" value="1"/>
</dbReference>
<comment type="function">
    <text evidence="1">Plays a role in peptidoglycan recycling by cleaving the terminal beta-1,4-linked N-acetylglucosamine (GlcNAc) from peptide-linked peptidoglycan fragments, giving rise to free GlcNAc, anhydro-N-acetylmuramic acid and anhydro-N-acetylmuramic acid-linked peptides.</text>
</comment>
<comment type="catalytic activity">
    <reaction evidence="1">
        <text>Hydrolysis of terminal non-reducing N-acetyl-D-hexosamine residues in N-acetyl-beta-D-hexosaminides.</text>
        <dbReference type="EC" id="3.2.1.52"/>
    </reaction>
</comment>
<comment type="pathway">
    <text evidence="1">Cell wall biogenesis; peptidoglycan recycling.</text>
</comment>
<comment type="subcellular location">
    <subcellularLocation>
        <location evidence="1">Cytoplasm</location>
    </subcellularLocation>
</comment>
<comment type="similarity">
    <text evidence="1">Belongs to the glycosyl hydrolase 3 family. NagZ subfamily.</text>
</comment>
<keyword id="KW-0131">Cell cycle</keyword>
<keyword id="KW-0132">Cell division</keyword>
<keyword id="KW-0133">Cell shape</keyword>
<keyword id="KW-0961">Cell wall biogenesis/degradation</keyword>
<keyword id="KW-0963">Cytoplasm</keyword>
<keyword id="KW-0326">Glycosidase</keyword>
<keyword id="KW-0378">Hydrolase</keyword>
<keyword id="KW-0573">Peptidoglycan synthesis</keyword>